<gene>
    <name evidence="1" type="primary">rpmE2</name>
    <name type="synonym">rpmE</name>
    <name type="ordered locus">plu0036</name>
</gene>
<protein>
    <recommendedName>
        <fullName evidence="1">Large ribosomal subunit protein bL31B</fullName>
    </recommendedName>
    <alternativeName>
        <fullName evidence="2">50S ribosomal protein L31 type B</fullName>
    </alternativeName>
</protein>
<name>RL31B_PHOLL</name>
<reference key="1">
    <citation type="journal article" date="2003" name="Nat. Biotechnol.">
        <title>The genome sequence of the entomopathogenic bacterium Photorhabdus luminescens.</title>
        <authorList>
            <person name="Duchaud E."/>
            <person name="Rusniok C."/>
            <person name="Frangeul L."/>
            <person name="Buchrieser C."/>
            <person name="Givaudan A."/>
            <person name="Taourit S."/>
            <person name="Bocs S."/>
            <person name="Boursaux-Eude C."/>
            <person name="Chandler M."/>
            <person name="Charles J.-F."/>
            <person name="Dassa E."/>
            <person name="Derose R."/>
            <person name="Derzelle S."/>
            <person name="Freyssinet G."/>
            <person name="Gaudriault S."/>
            <person name="Medigue C."/>
            <person name="Lanois A."/>
            <person name="Powell K."/>
            <person name="Siguier P."/>
            <person name="Vincent R."/>
            <person name="Wingate V."/>
            <person name="Zouine M."/>
            <person name="Glaser P."/>
            <person name="Boemare N."/>
            <person name="Danchin A."/>
            <person name="Kunst F."/>
        </authorList>
    </citation>
    <scope>NUCLEOTIDE SEQUENCE [LARGE SCALE GENOMIC DNA]</scope>
    <source>
        <strain>DSM 15139 / CIP 105565 / TT01</strain>
    </source>
</reference>
<organism>
    <name type="scientific">Photorhabdus laumondii subsp. laumondii (strain DSM 15139 / CIP 105565 / TT01)</name>
    <name type="common">Photorhabdus luminescens subsp. laumondii</name>
    <dbReference type="NCBI Taxonomy" id="243265"/>
    <lineage>
        <taxon>Bacteria</taxon>
        <taxon>Pseudomonadati</taxon>
        <taxon>Pseudomonadota</taxon>
        <taxon>Gammaproteobacteria</taxon>
        <taxon>Enterobacterales</taxon>
        <taxon>Morganellaceae</taxon>
        <taxon>Photorhabdus</taxon>
    </lineage>
</organism>
<evidence type="ECO:0000255" key="1">
    <source>
        <dbReference type="HAMAP-Rule" id="MF_00502"/>
    </source>
</evidence>
<evidence type="ECO:0000305" key="2"/>
<accession>Q7NA98</accession>
<proteinExistence type="inferred from homology"/>
<comment type="subunit">
    <text evidence="1">Part of the 50S ribosomal subunit.</text>
</comment>
<comment type="similarity">
    <text evidence="1">Belongs to the bacterial ribosomal protein bL31 family. Type B subfamily.</text>
</comment>
<feature type="chain" id="PRO_0000173245" description="Large ribosomal subunit protein bL31B">
    <location>
        <begin position="1"/>
        <end position="84"/>
    </location>
</feature>
<keyword id="KW-1185">Reference proteome</keyword>
<keyword id="KW-0687">Ribonucleoprotein</keyword>
<keyword id="KW-0689">Ribosomal protein</keyword>
<dbReference type="EMBL" id="BX571859">
    <property type="protein sequence ID" value="CAE12331.1"/>
    <property type="molecule type" value="Genomic_DNA"/>
</dbReference>
<dbReference type="RefSeq" id="WP_011144449.1">
    <property type="nucleotide sequence ID" value="NC_005126.1"/>
</dbReference>
<dbReference type="SMR" id="Q7NA98"/>
<dbReference type="STRING" id="243265.plu0036"/>
<dbReference type="GeneID" id="48846336"/>
<dbReference type="KEGG" id="plu:plu0036"/>
<dbReference type="eggNOG" id="COG0254">
    <property type="taxonomic scope" value="Bacteria"/>
</dbReference>
<dbReference type="HOGENOM" id="CLU_114306_2_1_6"/>
<dbReference type="OrthoDB" id="9803251at2"/>
<dbReference type="Proteomes" id="UP000002514">
    <property type="component" value="Chromosome"/>
</dbReference>
<dbReference type="GO" id="GO:1990904">
    <property type="term" value="C:ribonucleoprotein complex"/>
    <property type="evidence" value="ECO:0007669"/>
    <property type="project" value="UniProtKB-KW"/>
</dbReference>
<dbReference type="GO" id="GO:0005840">
    <property type="term" value="C:ribosome"/>
    <property type="evidence" value="ECO:0007669"/>
    <property type="project" value="UniProtKB-KW"/>
</dbReference>
<dbReference type="GO" id="GO:0003735">
    <property type="term" value="F:structural constituent of ribosome"/>
    <property type="evidence" value="ECO:0007669"/>
    <property type="project" value="InterPro"/>
</dbReference>
<dbReference type="GO" id="GO:0006412">
    <property type="term" value="P:translation"/>
    <property type="evidence" value="ECO:0007669"/>
    <property type="project" value="UniProtKB-UniRule"/>
</dbReference>
<dbReference type="Gene3D" id="4.10.830.30">
    <property type="entry name" value="Ribosomal protein L31"/>
    <property type="match status" value="1"/>
</dbReference>
<dbReference type="HAMAP" id="MF_00502">
    <property type="entry name" value="Ribosomal_bL31_2"/>
    <property type="match status" value="1"/>
</dbReference>
<dbReference type="InterPro" id="IPR034704">
    <property type="entry name" value="Ribosomal_bL28/bL31-like_sf"/>
</dbReference>
<dbReference type="InterPro" id="IPR002150">
    <property type="entry name" value="Ribosomal_bL31"/>
</dbReference>
<dbReference type="InterPro" id="IPR027493">
    <property type="entry name" value="Ribosomal_bL31_B"/>
</dbReference>
<dbReference type="InterPro" id="IPR042105">
    <property type="entry name" value="Ribosomal_bL31_sf"/>
</dbReference>
<dbReference type="NCBIfam" id="TIGR00105">
    <property type="entry name" value="L31"/>
    <property type="match status" value="1"/>
</dbReference>
<dbReference type="NCBIfam" id="NF002462">
    <property type="entry name" value="PRK01678.1"/>
    <property type="match status" value="1"/>
</dbReference>
<dbReference type="PANTHER" id="PTHR33280">
    <property type="entry name" value="50S RIBOSOMAL PROTEIN L31, CHLOROPLASTIC"/>
    <property type="match status" value="1"/>
</dbReference>
<dbReference type="PANTHER" id="PTHR33280:SF1">
    <property type="entry name" value="LARGE RIBOSOMAL SUBUNIT PROTEIN BL31C"/>
    <property type="match status" value="1"/>
</dbReference>
<dbReference type="Pfam" id="PF01197">
    <property type="entry name" value="Ribosomal_L31"/>
    <property type="match status" value="1"/>
</dbReference>
<dbReference type="PRINTS" id="PR01249">
    <property type="entry name" value="RIBOSOMALL31"/>
</dbReference>
<dbReference type="SUPFAM" id="SSF143800">
    <property type="entry name" value="L28p-like"/>
    <property type="match status" value="1"/>
</dbReference>
<sequence length="84" mass="9593">MKPDIHPNYRVVVFHDTSANAYFTIGSTIRTERTITLNGEEYPYVTVDVSSESHPFYTGKQKTLSQEGSTARFQKKFGRFIGNK</sequence>